<name>SURE_DESHD</name>
<accession>B8FYS8</accession>
<comment type="function">
    <text evidence="1">Nucleotidase that shows phosphatase activity on nucleoside 5'-monophosphates.</text>
</comment>
<comment type="catalytic activity">
    <reaction evidence="1">
        <text>a ribonucleoside 5'-phosphate + H2O = a ribonucleoside + phosphate</text>
        <dbReference type="Rhea" id="RHEA:12484"/>
        <dbReference type="ChEBI" id="CHEBI:15377"/>
        <dbReference type="ChEBI" id="CHEBI:18254"/>
        <dbReference type="ChEBI" id="CHEBI:43474"/>
        <dbReference type="ChEBI" id="CHEBI:58043"/>
        <dbReference type="EC" id="3.1.3.5"/>
    </reaction>
</comment>
<comment type="cofactor">
    <cofactor evidence="1">
        <name>a divalent metal cation</name>
        <dbReference type="ChEBI" id="CHEBI:60240"/>
    </cofactor>
    <text evidence="1">Binds 1 divalent metal cation per subunit.</text>
</comment>
<comment type="subcellular location">
    <subcellularLocation>
        <location evidence="1">Cytoplasm</location>
    </subcellularLocation>
</comment>
<comment type="similarity">
    <text evidence="1">Belongs to the SurE nucleotidase family.</text>
</comment>
<sequence>MHILLTNDDGYFAPGLQTLYTTLAEAGYDVFIVAPDSQKSATGHSITLFEPLFITKHSLDRGTGYAVSGKPADCVKLAIQGSIIPKPDLVISGINNGPNLGTDVFYSGTVSAAMEGVLLGVPAIAVSLASFSAVDYKPAAQFVALSLPKLRLGPGLININIPPLPEKEWKGVRVTKLGKAVYENVFEHRQAPYGRDYYWQAGTVSPEVDQETDLYAVQEGYVSITPMHSDLTDYIKLKELRQSLSLENPNK</sequence>
<proteinExistence type="inferred from homology"/>
<dbReference type="EC" id="3.1.3.5" evidence="1"/>
<dbReference type="EMBL" id="CP001336">
    <property type="protein sequence ID" value="ACL21001.1"/>
    <property type="molecule type" value="Genomic_DNA"/>
</dbReference>
<dbReference type="RefSeq" id="WP_005812070.1">
    <property type="nucleotide sequence ID" value="NC_011830.1"/>
</dbReference>
<dbReference type="SMR" id="B8FYS8"/>
<dbReference type="KEGG" id="dhd:Dhaf_2978"/>
<dbReference type="HOGENOM" id="CLU_045192_1_3_9"/>
<dbReference type="Proteomes" id="UP000007726">
    <property type="component" value="Chromosome"/>
</dbReference>
<dbReference type="GO" id="GO:0005737">
    <property type="term" value="C:cytoplasm"/>
    <property type="evidence" value="ECO:0007669"/>
    <property type="project" value="UniProtKB-SubCell"/>
</dbReference>
<dbReference type="GO" id="GO:0008254">
    <property type="term" value="F:3'-nucleotidase activity"/>
    <property type="evidence" value="ECO:0007669"/>
    <property type="project" value="TreeGrafter"/>
</dbReference>
<dbReference type="GO" id="GO:0008253">
    <property type="term" value="F:5'-nucleotidase activity"/>
    <property type="evidence" value="ECO:0007669"/>
    <property type="project" value="UniProtKB-UniRule"/>
</dbReference>
<dbReference type="GO" id="GO:0004309">
    <property type="term" value="F:exopolyphosphatase activity"/>
    <property type="evidence" value="ECO:0007669"/>
    <property type="project" value="TreeGrafter"/>
</dbReference>
<dbReference type="GO" id="GO:0046872">
    <property type="term" value="F:metal ion binding"/>
    <property type="evidence" value="ECO:0007669"/>
    <property type="project" value="UniProtKB-UniRule"/>
</dbReference>
<dbReference type="GO" id="GO:0000166">
    <property type="term" value="F:nucleotide binding"/>
    <property type="evidence" value="ECO:0007669"/>
    <property type="project" value="UniProtKB-KW"/>
</dbReference>
<dbReference type="FunFam" id="3.40.1210.10:FF:000001">
    <property type="entry name" value="5'/3'-nucleotidase SurE"/>
    <property type="match status" value="1"/>
</dbReference>
<dbReference type="Gene3D" id="3.40.1210.10">
    <property type="entry name" value="Survival protein SurE-like phosphatase/nucleotidase"/>
    <property type="match status" value="1"/>
</dbReference>
<dbReference type="HAMAP" id="MF_00060">
    <property type="entry name" value="SurE"/>
    <property type="match status" value="1"/>
</dbReference>
<dbReference type="InterPro" id="IPR030048">
    <property type="entry name" value="SurE"/>
</dbReference>
<dbReference type="InterPro" id="IPR002828">
    <property type="entry name" value="SurE-like_Pase/nucleotidase"/>
</dbReference>
<dbReference type="InterPro" id="IPR036523">
    <property type="entry name" value="SurE-like_sf"/>
</dbReference>
<dbReference type="NCBIfam" id="NF001490">
    <property type="entry name" value="PRK00346.1-4"/>
    <property type="match status" value="1"/>
</dbReference>
<dbReference type="NCBIfam" id="NF001492">
    <property type="entry name" value="PRK00346.2-2"/>
    <property type="match status" value="1"/>
</dbReference>
<dbReference type="NCBIfam" id="TIGR00087">
    <property type="entry name" value="surE"/>
    <property type="match status" value="1"/>
</dbReference>
<dbReference type="PANTHER" id="PTHR30457">
    <property type="entry name" value="5'-NUCLEOTIDASE SURE"/>
    <property type="match status" value="1"/>
</dbReference>
<dbReference type="PANTHER" id="PTHR30457:SF12">
    <property type="entry name" value="5'_3'-NUCLEOTIDASE SURE"/>
    <property type="match status" value="1"/>
</dbReference>
<dbReference type="Pfam" id="PF01975">
    <property type="entry name" value="SurE"/>
    <property type="match status" value="1"/>
</dbReference>
<dbReference type="SUPFAM" id="SSF64167">
    <property type="entry name" value="SurE-like"/>
    <property type="match status" value="1"/>
</dbReference>
<gene>
    <name evidence="1" type="primary">surE</name>
    <name type="ordered locus">Dhaf_2978</name>
</gene>
<feature type="chain" id="PRO_1000196593" description="5'-nucleotidase SurE">
    <location>
        <begin position="1"/>
        <end position="251"/>
    </location>
</feature>
<feature type="binding site" evidence="1">
    <location>
        <position position="8"/>
    </location>
    <ligand>
        <name>a divalent metal cation</name>
        <dbReference type="ChEBI" id="CHEBI:60240"/>
    </ligand>
</feature>
<feature type="binding site" evidence="1">
    <location>
        <position position="9"/>
    </location>
    <ligand>
        <name>a divalent metal cation</name>
        <dbReference type="ChEBI" id="CHEBI:60240"/>
    </ligand>
</feature>
<feature type="binding site" evidence="1">
    <location>
        <position position="40"/>
    </location>
    <ligand>
        <name>a divalent metal cation</name>
        <dbReference type="ChEBI" id="CHEBI:60240"/>
    </ligand>
</feature>
<feature type="binding site" evidence="1">
    <location>
        <position position="95"/>
    </location>
    <ligand>
        <name>a divalent metal cation</name>
        <dbReference type="ChEBI" id="CHEBI:60240"/>
    </ligand>
</feature>
<keyword id="KW-0963">Cytoplasm</keyword>
<keyword id="KW-0378">Hydrolase</keyword>
<keyword id="KW-0479">Metal-binding</keyword>
<keyword id="KW-0547">Nucleotide-binding</keyword>
<organism>
    <name type="scientific">Desulfitobacterium hafniense (strain DSM 10664 / DCB-2)</name>
    <dbReference type="NCBI Taxonomy" id="272564"/>
    <lineage>
        <taxon>Bacteria</taxon>
        <taxon>Bacillati</taxon>
        <taxon>Bacillota</taxon>
        <taxon>Clostridia</taxon>
        <taxon>Eubacteriales</taxon>
        <taxon>Desulfitobacteriaceae</taxon>
        <taxon>Desulfitobacterium</taxon>
    </lineage>
</organism>
<evidence type="ECO:0000255" key="1">
    <source>
        <dbReference type="HAMAP-Rule" id="MF_00060"/>
    </source>
</evidence>
<reference key="1">
    <citation type="journal article" date="2012" name="BMC Microbiol.">
        <title>Genome sequence of Desulfitobacterium hafniense DCB-2, a Gram-positive anaerobe capable of dehalogenation and metal reduction.</title>
        <authorList>
            <person name="Kim S.H."/>
            <person name="Harzman C."/>
            <person name="Davis J.K."/>
            <person name="Hutcheson R."/>
            <person name="Broderick J.B."/>
            <person name="Marsh T.L."/>
            <person name="Tiedje J.M."/>
        </authorList>
    </citation>
    <scope>NUCLEOTIDE SEQUENCE [LARGE SCALE GENOMIC DNA]</scope>
    <source>
        <strain>DSM 10664 / DCB-2</strain>
    </source>
</reference>
<protein>
    <recommendedName>
        <fullName evidence="1">5'-nucleotidase SurE</fullName>
        <ecNumber evidence="1">3.1.3.5</ecNumber>
    </recommendedName>
    <alternativeName>
        <fullName evidence="1">Nucleoside 5'-monophosphate phosphohydrolase</fullName>
    </alternativeName>
</protein>